<accession>Q9VLA1</accession>
<accession>Q868Q3</accession>
<accession>Q8IPE6</accession>
<accession>Q95U07</accession>
<name>B3G2S_DROME</name>
<organism evidence="10">
    <name type="scientific">Drosophila melanogaster</name>
    <name type="common">Fruit fly</name>
    <dbReference type="NCBI Taxonomy" id="7227"/>
    <lineage>
        <taxon>Eukaryota</taxon>
        <taxon>Metazoa</taxon>
        <taxon>Ecdysozoa</taxon>
        <taxon>Arthropoda</taxon>
        <taxon>Hexapoda</taxon>
        <taxon>Insecta</taxon>
        <taxon>Pterygota</taxon>
        <taxon>Neoptera</taxon>
        <taxon>Endopterygota</taxon>
        <taxon>Diptera</taxon>
        <taxon>Brachycera</taxon>
        <taxon>Muscomorpha</taxon>
        <taxon>Ephydroidea</taxon>
        <taxon>Drosophilidae</taxon>
        <taxon>Drosophila</taxon>
        <taxon>Sophophora</taxon>
    </lineage>
</organism>
<evidence type="ECO:0000250" key="1"/>
<evidence type="ECO:0000255" key="2"/>
<evidence type="ECO:0000256" key="3">
    <source>
        <dbReference type="SAM" id="MobiDB-lite"/>
    </source>
</evidence>
<evidence type="ECO:0000269" key="4">
    <source>
    </source>
</evidence>
<evidence type="ECO:0000269" key="5">
    <source>
    </source>
</evidence>
<evidence type="ECO:0000269" key="6">
    <source>
    </source>
</evidence>
<evidence type="ECO:0000269" key="7">
    <source>
    </source>
</evidence>
<evidence type="ECO:0000303" key="8">
    <source>
    </source>
</evidence>
<evidence type="ECO:0000305" key="9"/>
<evidence type="ECO:0000312" key="10">
    <source>
        <dbReference type="EMBL" id="AAF52795.2"/>
    </source>
</evidence>
<gene>
    <name type="primary">GlcAT-S</name>
    <name type="synonym">GLCAT-BSI</name>
    <name type="ORF">CG3881</name>
</gene>
<sequence>MSSARLLESQTSDEDNEDIERRPHQSHSRSCSNNTTPTHPPHPMVRKGGVARRICLIGGALFLLLVALCYLTLSGDTRLGGSEDSEEGSHHGLDSMNFRPLNETVHICSESYEDRRQFMQDKPQSDYVQLPVIYFVTPTYPRREQIPELTRLAHTLLHIPRLHWLVADDQEKCNDYMDTLLYRFGMPFTHMVSPMPSKFRNEKPAPRGVANRRAALQWIRQHNLTNGILYFGDDDNTYDLRLFSEIRKTQRVSMFPVGLIADYGVSGPVVRKGKVVAFLDSWVAGRRWPVDMAGFAVNLEYMAQYPYVNMPYKPGYEEDLFLRSIGLQMNLIEPRGNNCTEILVWHTQTKSKKLGMVRLESKYLDDRSNLGALLHNLKLMGVTSTTESEGRNALISKNGRENPHSKILS</sequence>
<dbReference type="EC" id="2.4.1.135" evidence="5"/>
<dbReference type="EMBL" id="AE014134">
    <property type="protein sequence ID" value="AAF52795.2"/>
    <property type="molecule type" value="Genomic_DNA"/>
</dbReference>
<dbReference type="EMBL" id="AE014134">
    <property type="protein sequence ID" value="AAF52794.2"/>
    <property type="molecule type" value="Genomic_DNA"/>
</dbReference>
<dbReference type="EMBL" id="AY058399">
    <property type="protein sequence ID" value="AAL13628.1"/>
    <property type="molecule type" value="mRNA"/>
</dbReference>
<dbReference type="EMBL" id="AB080696">
    <property type="protein sequence ID" value="BAC65096.1"/>
    <property type="status" value="ALT_FRAME"/>
    <property type="molecule type" value="mRNA"/>
</dbReference>
<dbReference type="RefSeq" id="NP_609303.1">
    <molecule id="Q9VLA1-1"/>
    <property type="nucleotide sequence ID" value="NM_135459.4"/>
</dbReference>
<dbReference type="RefSeq" id="NP_723476.1">
    <molecule id="Q9VLA1-2"/>
    <property type="nucleotide sequence ID" value="NM_164864.2"/>
</dbReference>
<dbReference type="SMR" id="Q9VLA1"/>
<dbReference type="FunCoup" id="Q9VLA1">
    <property type="interactions" value="172"/>
</dbReference>
<dbReference type="IntAct" id="Q9VLA1">
    <property type="interactions" value="1"/>
</dbReference>
<dbReference type="STRING" id="7227.FBpp0291409"/>
<dbReference type="CAZy" id="GT43">
    <property type="family name" value="Glycosyltransferase Family 43"/>
</dbReference>
<dbReference type="GlyCosmos" id="Q9VLA1">
    <property type="glycosylation" value="3 sites, No reported glycans"/>
</dbReference>
<dbReference type="GlyGen" id="Q9VLA1">
    <property type="glycosylation" value="4 sites"/>
</dbReference>
<dbReference type="iPTMnet" id="Q9VLA1"/>
<dbReference type="DNASU" id="34282"/>
<dbReference type="EnsemblMetazoa" id="FBtr0079841">
    <molecule id="Q9VLA1-2"/>
    <property type="protein sequence ID" value="FBpp0079438"/>
    <property type="gene ID" value="FBgn0032135"/>
</dbReference>
<dbReference type="EnsemblMetazoa" id="FBtr0079842">
    <molecule id="Q9VLA1-1"/>
    <property type="protein sequence ID" value="FBpp0079439"/>
    <property type="gene ID" value="FBgn0032135"/>
</dbReference>
<dbReference type="GeneID" id="34282"/>
<dbReference type="KEGG" id="dme:Dmel_CG3881"/>
<dbReference type="UCSC" id="CG3881-RA">
    <molecule id="Q9VLA1-1"/>
    <property type="organism name" value="d. melanogaster"/>
</dbReference>
<dbReference type="AGR" id="FB:FBgn0032135"/>
<dbReference type="CTD" id="34282"/>
<dbReference type="FlyBase" id="FBgn0032135">
    <property type="gene designation" value="GlcAT-S"/>
</dbReference>
<dbReference type="VEuPathDB" id="VectorBase:FBgn0032135"/>
<dbReference type="eggNOG" id="KOG1476">
    <property type="taxonomic scope" value="Eukaryota"/>
</dbReference>
<dbReference type="InParanoid" id="Q9VLA1"/>
<dbReference type="OrthoDB" id="675023at2759"/>
<dbReference type="PhylomeDB" id="Q9VLA1"/>
<dbReference type="Reactome" id="R-DME-1971475">
    <property type="pathway name" value="A tetrasaccharide linker sequence is required for GAG synthesis"/>
</dbReference>
<dbReference type="UniPathway" id="UPA00378"/>
<dbReference type="BioGRID-ORCS" id="34282">
    <property type="hits" value="0 hits in 1 CRISPR screen"/>
</dbReference>
<dbReference type="GenomeRNAi" id="34282"/>
<dbReference type="PRO" id="PR:Q9VLA1"/>
<dbReference type="Proteomes" id="UP000000803">
    <property type="component" value="Chromosome 2L"/>
</dbReference>
<dbReference type="Bgee" id="FBgn0032135">
    <property type="expression patterns" value="Expressed in adult olfactory receptor neuron Ir75d in antenna and 202 other cell types or tissues"/>
</dbReference>
<dbReference type="ExpressionAtlas" id="Q9VLA1">
    <property type="expression patterns" value="baseline and differential"/>
</dbReference>
<dbReference type="GO" id="GO:0000139">
    <property type="term" value="C:Golgi membrane"/>
    <property type="evidence" value="ECO:0000318"/>
    <property type="project" value="GO_Central"/>
</dbReference>
<dbReference type="GO" id="GO:0046988">
    <property type="term" value="F:asioloorosomucoid beta-1,3-glucuronosyltransferase activity"/>
    <property type="evidence" value="ECO:0000314"/>
    <property type="project" value="FlyBase"/>
</dbReference>
<dbReference type="GO" id="GO:0046989">
    <property type="term" value="F:galactosyl beta-1,3 N-acetylgalactosamine beta-1,3-glucuronosyltransferase activity"/>
    <property type="evidence" value="ECO:0000314"/>
    <property type="project" value="FlyBase"/>
</dbReference>
<dbReference type="GO" id="GO:0015018">
    <property type="term" value="F:galactosylgalactosylxylosylprotein 3-beta-glucuronosyltransferase activity"/>
    <property type="evidence" value="ECO:0000314"/>
    <property type="project" value="FlyBase"/>
</dbReference>
<dbReference type="GO" id="GO:0015020">
    <property type="term" value="F:glucuronosyltransferase activity"/>
    <property type="evidence" value="ECO:0000314"/>
    <property type="project" value="FlyBase"/>
</dbReference>
<dbReference type="GO" id="GO:0046872">
    <property type="term" value="F:metal ion binding"/>
    <property type="evidence" value="ECO:0007669"/>
    <property type="project" value="UniProtKB-KW"/>
</dbReference>
<dbReference type="GO" id="GO:0046987">
    <property type="term" value="F:N-acetyllactosamine beta-1,3-glucuronosyltransferase activity"/>
    <property type="evidence" value="ECO:0000314"/>
    <property type="project" value="FlyBase"/>
</dbReference>
<dbReference type="GO" id="GO:0005975">
    <property type="term" value="P:carbohydrate metabolic process"/>
    <property type="evidence" value="ECO:0000318"/>
    <property type="project" value="GO_Central"/>
</dbReference>
<dbReference type="GO" id="GO:0050650">
    <property type="term" value="P:chondroitin sulfate proteoglycan biosynthetic process"/>
    <property type="evidence" value="ECO:0000318"/>
    <property type="project" value="GO_Central"/>
</dbReference>
<dbReference type="GO" id="GO:0009101">
    <property type="term" value="P:glycoprotein biosynthetic process"/>
    <property type="evidence" value="ECO:0000303"/>
    <property type="project" value="FlyBase"/>
</dbReference>
<dbReference type="GO" id="GO:0006688">
    <property type="term" value="P:glycosphingolipid biosynthetic process"/>
    <property type="evidence" value="ECO:0000303"/>
    <property type="project" value="FlyBase"/>
</dbReference>
<dbReference type="GO" id="GO:0006487">
    <property type="term" value="P:protein N-linked glycosylation"/>
    <property type="evidence" value="ECO:0000314"/>
    <property type="project" value="FlyBase"/>
</dbReference>
<dbReference type="GO" id="GO:0030166">
    <property type="term" value="P:proteoglycan biosynthetic process"/>
    <property type="evidence" value="ECO:0000303"/>
    <property type="project" value="FlyBase"/>
</dbReference>
<dbReference type="CDD" id="cd00218">
    <property type="entry name" value="GlcAT-I"/>
    <property type="match status" value="1"/>
</dbReference>
<dbReference type="FunFam" id="3.90.550.10:FF:000044">
    <property type="entry name" value="Galactosylgalactosylxylosylprotein 3-beta-glucuronosyltransferase"/>
    <property type="match status" value="1"/>
</dbReference>
<dbReference type="Gene3D" id="3.90.550.10">
    <property type="entry name" value="Spore Coat Polysaccharide Biosynthesis Protein SpsA, Chain A"/>
    <property type="match status" value="1"/>
</dbReference>
<dbReference type="InterPro" id="IPR005027">
    <property type="entry name" value="Glyco_trans_43"/>
</dbReference>
<dbReference type="InterPro" id="IPR029044">
    <property type="entry name" value="Nucleotide-diphossugar_trans"/>
</dbReference>
<dbReference type="PANTHER" id="PTHR10896">
    <property type="entry name" value="GALACTOSYLGALACTOSYLXYLOSYLPROTEIN 3-BETA-GLUCURONOSYLTRANSFERASE BETA-1,3-GLUCURONYLTRANSFERASE"/>
    <property type="match status" value="1"/>
</dbReference>
<dbReference type="PANTHER" id="PTHR10896:SF51">
    <property type="entry name" value="GALACTOSYLGALACTOSYLXYLOSYLPROTEIN 3-BETA-GLUCURONOSYLTRANSFERASE S"/>
    <property type="match status" value="1"/>
</dbReference>
<dbReference type="Pfam" id="PF03360">
    <property type="entry name" value="Glyco_transf_43"/>
    <property type="match status" value="1"/>
</dbReference>
<dbReference type="SUPFAM" id="SSF53448">
    <property type="entry name" value="Nucleotide-diphospho-sugar transferases"/>
    <property type="match status" value="1"/>
</dbReference>
<proteinExistence type="evidence at protein level"/>
<keyword id="KW-0025">Alternative splicing</keyword>
<keyword id="KW-0325">Glycoprotein</keyword>
<keyword id="KW-0333">Golgi apparatus</keyword>
<keyword id="KW-0464">Manganese</keyword>
<keyword id="KW-0472">Membrane</keyword>
<keyword id="KW-0479">Metal-binding</keyword>
<keyword id="KW-0597">Phosphoprotein</keyword>
<keyword id="KW-1185">Reference proteome</keyword>
<keyword id="KW-0735">Signal-anchor</keyword>
<keyword id="KW-0808">Transferase</keyword>
<keyword id="KW-0812">Transmembrane</keyword>
<keyword id="KW-1133">Transmembrane helix</keyword>
<protein>
    <recommendedName>
        <fullName>Galactosylgalactosylxylosylprotein 3-beta-glucuronosyltransferase S</fullName>
        <ecNumber evidence="5">2.4.1.135</ecNumber>
    </recommendedName>
    <alternativeName>
        <fullName>Beta-1,3-glucuronyltransferase S</fullName>
    </alternativeName>
    <alternativeName>
        <fullName>Glucuronosyltransferase S</fullName>
        <shortName>GlcAT-S</shortName>
    </alternativeName>
    <alternativeName>
        <fullName>UDP-glucuronosyltransferase S</fullName>
        <shortName>DmGlcAT-BSI</shortName>
    </alternativeName>
</protein>
<comment type="function">
    <text evidence="5">Involved in the biosynthesis of L2/HNK-1 carbohydrate epitope on both glycolipids and glycoproteins. Enzyme has a broad specificity.</text>
</comment>
<comment type="catalytic activity">
    <reaction evidence="5">
        <text>3-O-(beta-D-galactosyl-(1-&gt;3)-beta-D-galactosyl-(1-&gt;4)-beta-D-xylosyl)-L-seryl-[protein] + UDP-alpha-D-glucuronate = 3-O-(beta-D-GlcA-(1-&gt;3)-beta-D-Gal-(1-&gt;3)-beta-D-Gal-(1-&gt;4)-beta-D-Xyl)-L-seryl-[protein] + UDP + H(+)</text>
        <dbReference type="Rhea" id="RHEA:24168"/>
        <dbReference type="Rhea" id="RHEA-COMP:12571"/>
        <dbReference type="Rhea" id="RHEA-COMP:12573"/>
        <dbReference type="ChEBI" id="CHEBI:15378"/>
        <dbReference type="ChEBI" id="CHEBI:58052"/>
        <dbReference type="ChEBI" id="CHEBI:58223"/>
        <dbReference type="ChEBI" id="CHEBI:132090"/>
        <dbReference type="ChEBI" id="CHEBI:132093"/>
        <dbReference type="EC" id="2.4.1.135"/>
    </reaction>
</comment>
<comment type="cofactor">
    <cofactor evidence="5">
        <name>Mn(2+)</name>
        <dbReference type="ChEBI" id="CHEBI:29035"/>
    </cofactor>
</comment>
<comment type="pathway">
    <text>Protein modification; protein glycosylation.</text>
</comment>
<comment type="subcellular location">
    <subcellularLocation>
        <location evidence="9">Golgi apparatus membrane</location>
        <topology evidence="9">Single-pass type II membrane protein</topology>
    </subcellularLocation>
</comment>
<comment type="alternative products">
    <event type="alternative splicing"/>
    <isoform>
        <id>Q9VLA1-1</id>
        <name evidence="8">b</name>
        <sequence type="displayed"/>
    </isoform>
    <isoform>
        <id>Q9VLA1-2</id>
        <name evidence="8">a</name>
        <sequence type="described" ref="VSP_050624 VSP_050625"/>
    </isoform>
</comment>
<comment type="developmental stage">
    <text evidence="5">Expressed from early embryos to adults; maximal expression in third instar larvae through to adulthood.</text>
</comment>
<comment type="similarity">
    <text evidence="9">Belongs to the glycosyltransferase 43 family.</text>
</comment>
<comment type="sequence caution" evidence="9">
    <conflict type="frameshift">
        <sequence resource="EMBL-CDS" id="BAC65096"/>
    </conflict>
</comment>
<reference evidence="9" key="1">
    <citation type="journal article" date="2000" name="Science">
        <title>The genome sequence of Drosophila melanogaster.</title>
        <authorList>
            <person name="Adams M.D."/>
            <person name="Celniker S.E."/>
            <person name="Holt R.A."/>
            <person name="Evans C.A."/>
            <person name="Gocayne J.D."/>
            <person name="Amanatides P.G."/>
            <person name="Scherer S.E."/>
            <person name="Li P.W."/>
            <person name="Hoskins R.A."/>
            <person name="Galle R.F."/>
            <person name="George R.A."/>
            <person name="Lewis S.E."/>
            <person name="Richards S."/>
            <person name="Ashburner M."/>
            <person name="Henderson S.N."/>
            <person name="Sutton G.G."/>
            <person name="Wortman J.R."/>
            <person name="Yandell M.D."/>
            <person name="Zhang Q."/>
            <person name="Chen L.X."/>
            <person name="Brandon R.C."/>
            <person name="Rogers Y.-H.C."/>
            <person name="Blazej R.G."/>
            <person name="Champe M."/>
            <person name="Pfeiffer B.D."/>
            <person name="Wan K.H."/>
            <person name="Doyle C."/>
            <person name="Baxter E.G."/>
            <person name="Helt G."/>
            <person name="Nelson C.R."/>
            <person name="Miklos G.L.G."/>
            <person name="Abril J.F."/>
            <person name="Agbayani A."/>
            <person name="An H.-J."/>
            <person name="Andrews-Pfannkoch C."/>
            <person name="Baldwin D."/>
            <person name="Ballew R.M."/>
            <person name="Basu A."/>
            <person name="Baxendale J."/>
            <person name="Bayraktaroglu L."/>
            <person name="Beasley E.M."/>
            <person name="Beeson K.Y."/>
            <person name="Benos P.V."/>
            <person name="Berman B.P."/>
            <person name="Bhandari D."/>
            <person name="Bolshakov S."/>
            <person name="Borkova D."/>
            <person name="Botchan M.R."/>
            <person name="Bouck J."/>
            <person name="Brokstein P."/>
            <person name="Brottier P."/>
            <person name="Burtis K.C."/>
            <person name="Busam D.A."/>
            <person name="Butler H."/>
            <person name="Cadieu E."/>
            <person name="Center A."/>
            <person name="Chandra I."/>
            <person name="Cherry J.M."/>
            <person name="Cawley S."/>
            <person name="Dahlke C."/>
            <person name="Davenport L.B."/>
            <person name="Davies P."/>
            <person name="de Pablos B."/>
            <person name="Delcher A."/>
            <person name="Deng Z."/>
            <person name="Mays A.D."/>
            <person name="Dew I."/>
            <person name="Dietz S.M."/>
            <person name="Dodson K."/>
            <person name="Doup L.E."/>
            <person name="Downes M."/>
            <person name="Dugan-Rocha S."/>
            <person name="Dunkov B.C."/>
            <person name="Dunn P."/>
            <person name="Durbin K.J."/>
            <person name="Evangelista C.C."/>
            <person name="Ferraz C."/>
            <person name="Ferriera S."/>
            <person name="Fleischmann W."/>
            <person name="Fosler C."/>
            <person name="Gabrielian A.E."/>
            <person name="Garg N.S."/>
            <person name="Gelbart W.M."/>
            <person name="Glasser K."/>
            <person name="Glodek A."/>
            <person name="Gong F."/>
            <person name="Gorrell J.H."/>
            <person name="Gu Z."/>
            <person name="Guan P."/>
            <person name="Harris M."/>
            <person name="Harris N.L."/>
            <person name="Harvey D.A."/>
            <person name="Heiman T.J."/>
            <person name="Hernandez J.R."/>
            <person name="Houck J."/>
            <person name="Hostin D."/>
            <person name="Houston K.A."/>
            <person name="Howland T.J."/>
            <person name="Wei M.-H."/>
            <person name="Ibegwam C."/>
            <person name="Jalali M."/>
            <person name="Kalush F."/>
            <person name="Karpen G.H."/>
            <person name="Ke Z."/>
            <person name="Kennison J.A."/>
            <person name="Ketchum K.A."/>
            <person name="Kimmel B.E."/>
            <person name="Kodira C.D."/>
            <person name="Kraft C.L."/>
            <person name="Kravitz S."/>
            <person name="Kulp D."/>
            <person name="Lai Z."/>
            <person name="Lasko P."/>
            <person name="Lei Y."/>
            <person name="Levitsky A.A."/>
            <person name="Li J.H."/>
            <person name="Li Z."/>
            <person name="Liang Y."/>
            <person name="Lin X."/>
            <person name="Liu X."/>
            <person name="Mattei B."/>
            <person name="McIntosh T.C."/>
            <person name="McLeod M.P."/>
            <person name="McPherson D."/>
            <person name="Merkulov G."/>
            <person name="Milshina N.V."/>
            <person name="Mobarry C."/>
            <person name="Morris J."/>
            <person name="Moshrefi A."/>
            <person name="Mount S.M."/>
            <person name="Moy M."/>
            <person name="Murphy B."/>
            <person name="Murphy L."/>
            <person name="Muzny D.M."/>
            <person name="Nelson D.L."/>
            <person name="Nelson D.R."/>
            <person name="Nelson K.A."/>
            <person name="Nixon K."/>
            <person name="Nusskern D.R."/>
            <person name="Pacleb J.M."/>
            <person name="Palazzolo M."/>
            <person name="Pittman G.S."/>
            <person name="Pan S."/>
            <person name="Pollard J."/>
            <person name="Puri V."/>
            <person name="Reese M.G."/>
            <person name="Reinert K."/>
            <person name="Remington K."/>
            <person name="Saunders R.D.C."/>
            <person name="Scheeler F."/>
            <person name="Shen H."/>
            <person name="Shue B.C."/>
            <person name="Siden-Kiamos I."/>
            <person name="Simpson M."/>
            <person name="Skupski M.P."/>
            <person name="Smith T.J."/>
            <person name="Spier E."/>
            <person name="Spradling A.C."/>
            <person name="Stapleton M."/>
            <person name="Strong R."/>
            <person name="Sun E."/>
            <person name="Svirskas R."/>
            <person name="Tector C."/>
            <person name="Turner R."/>
            <person name="Venter E."/>
            <person name="Wang A.H."/>
            <person name="Wang X."/>
            <person name="Wang Z.-Y."/>
            <person name="Wassarman D.A."/>
            <person name="Weinstock G.M."/>
            <person name="Weissenbach J."/>
            <person name="Williams S.M."/>
            <person name="Woodage T."/>
            <person name="Worley K.C."/>
            <person name="Wu D."/>
            <person name="Yang S."/>
            <person name="Yao Q.A."/>
            <person name="Ye J."/>
            <person name="Yeh R.-F."/>
            <person name="Zaveri J.S."/>
            <person name="Zhan M."/>
            <person name="Zhang G."/>
            <person name="Zhao Q."/>
            <person name="Zheng L."/>
            <person name="Zheng X.H."/>
            <person name="Zhong F.N."/>
            <person name="Zhong W."/>
            <person name="Zhou X."/>
            <person name="Zhu S.C."/>
            <person name="Zhu X."/>
            <person name="Smith H.O."/>
            <person name="Gibbs R.A."/>
            <person name="Myers E.W."/>
            <person name="Rubin G.M."/>
            <person name="Venter J.C."/>
        </authorList>
    </citation>
    <scope>NUCLEOTIDE SEQUENCE [LARGE SCALE GENOMIC DNA]</scope>
    <source>
        <strain evidence="4">Berkeley</strain>
    </source>
</reference>
<reference evidence="9" key="2">
    <citation type="journal article" date="2002" name="Genome Biol.">
        <title>Annotation of the Drosophila melanogaster euchromatic genome: a systematic review.</title>
        <authorList>
            <person name="Misra S."/>
            <person name="Crosby M.A."/>
            <person name="Mungall C.J."/>
            <person name="Matthews B.B."/>
            <person name="Campbell K.S."/>
            <person name="Hradecky P."/>
            <person name="Huang Y."/>
            <person name="Kaminker J.S."/>
            <person name="Millburn G.H."/>
            <person name="Prochnik S.E."/>
            <person name="Smith C.D."/>
            <person name="Tupy J.L."/>
            <person name="Whitfield E.J."/>
            <person name="Bayraktaroglu L."/>
            <person name="Berman B.P."/>
            <person name="Bettencourt B.R."/>
            <person name="Celniker S.E."/>
            <person name="de Grey A.D.N.J."/>
            <person name="Drysdale R.A."/>
            <person name="Harris N.L."/>
            <person name="Richter J."/>
            <person name="Russo S."/>
            <person name="Schroeder A.J."/>
            <person name="Shu S.Q."/>
            <person name="Stapleton M."/>
            <person name="Yamada C."/>
            <person name="Ashburner M."/>
            <person name="Gelbart W.M."/>
            <person name="Rubin G.M."/>
            <person name="Lewis S.E."/>
        </authorList>
    </citation>
    <scope>GENOME REANNOTATION</scope>
    <scope>ALTERNATIVE SPLICING</scope>
    <source>
        <strain>Berkeley</strain>
    </source>
</reference>
<reference evidence="9" key="3">
    <citation type="journal article" date="2002" name="Genome Biol.">
        <title>A Drosophila full-length cDNA resource.</title>
        <authorList>
            <person name="Stapleton M."/>
            <person name="Carlson J.W."/>
            <person name="Brokstein P."/>
            <person name="Yu C."/>
            <person name="Champe M."/>
            <person name="George R.A."/>
            <person name="Guarin H."/>
            <person name="Kronmiller B."/>
            <person name="Pacleb J.M."/>
            <person name="Park S."/>
            <person name="Wan K.H."/>
            <person name="Rubin G.M."/>
            <person name="Celniker S.E."/>
        </authorList>
    </citation>
    <scope>NUCLEOTIDE SEQUENCE [LARGE SCALE MRNA] (ISOFORM B)</scope>
    <source>
        <strain evidence="6">Berkeley</strain>
        <tissue evidence="6">Head</tissue>
    </source>
</reference>
<reference evidence="9" key="4">
    <citation type="journal article" date="2003" name="J. Biol. Chem.">
        <title>Identification and characterization of three Drosophila melanogaster glucuronyltransferases responsible for the synthesis of the conserved glycosaminoglycan-protein linkage region of proteoglycans: two novel homologs exhibit broad specificity toward oligosaccharides from proteoglycans, glycoproteins, and glycosphingolipids.</title>
        <authorList>
            <person name="Kim B.-T."/>
            <person name="Tsuchida K."/>
            <person name="Lincecum J."/>
            <person name="Kitagawa K."/>
            <person name="Bernfield M."/>
            <person name="Sugahara K."/>
        </authorList>
    </citation>
    <scope>NUCLEOTIDE SEQUENCE [MRNA] OF 22-409 (ISOFORM B)</scope>
    <scope>FUNCTION</scope>
    <scope>COFACTOR</scope>
    <scope>DEVELOPMENTAL STAGE</scope>
</reference>
<reference key="5">
    <citation type="journal article" date="2008" name="J. Proteome Res.">
        <title>Phosphoproteome analysis of Drosophila melanogaster embryos.</title>
        <authorList>
            <person name="Zhai B."/>
            <person name="Villen J."/>
            <person name="Beausoleil S.A."/>
            <person name="Mintseris J."/>
            <person name="Gygi S.P."/>
        </authorList>
    </citation>
    <scope>PHOSPHORYLATION [LARGE SCALE ANALYSIS] AT SER-9; THR-11; SER-12 AND SER-32</scope>
    <scope>IDENTIFICATION BY MASS SPECTROMETRY</scope>
    <source>
        <tissue>Embryo</tissue>
    </source>
</reference>
<feature type="chain" id="PRO_0000195181" description="Galactosylgalactosylxylosylprotein 3-beta-glucuronosyltransferase S">
    <location>
        <begin position="1"/>
        <end position="409"/>
    </location>
</feature>
<feature type="topological domain" description="Cytoplasmic" evidence="2">
    <location>
        <begin position="1"/>
        <end position="53"/>
    </location>
</feature>
<feature type="transmembrane region" description="Helical; Signal-anchor for type II membrane protein" evidence="2">
    <location>
        <begin position="54"/>
        <end position="73"/>
    </location>
</feature>
<feature type="topological domain" description="Lumenal" evidence="2">
    <location>
        <begin position="74"/>
        <end position="409"/>
    </location>
</feature>
<feature type="region of interest" description="Disordered" evidence="3">
    <location>
        <begin position="1"/>
        <end position="45"/>
    </location>
</feature>
<feature type="region of interest" description="Disordered" evidence="3">
    <location>
        <begin position="389"/>
        <end position="409"/>
    </location>
</feature>
<feature type="compositionally biased region" description="Basic and acidic residues" evidence="3">
    <location>
        <begin position="398"/>
        <end position="409"/>
    </location>
</feature>
<feature type="active site" description="Proton acceptor" evidence="1">
    <location>
        <position position="318"/>
    </location>
</feature>
<feature type="binding site" evidence="1">
    <location>
        <position position="235"/>
    </location>
    <ligand>
        <name>Mn(2+)</name>
        <dbReference type="ChEBI" id="CHEBI:29035"/>
    </ligand>
</feature>
<feature type="modified residue" description="Phosphoserine" evidence="7">
    <location>
        <position position="9"/>
    </location>
</feature>
<feature type="modified residue" description="Phosphothreonine" evidence="7">
    <location>
        <position position="11"/>
    </location>
</feature>
<feature type="modified residue" description="Phosphoserine" evidence="7">
    <location>
        <position position="12"/>
    </location>
</feature>
<feature type="modified residue" description="Phosphoserine" evidence="7">
    <location>
        <position position="32"/>
    </location>
</feature>
<feature type="glycosylation site" description="N-linked (GlcNAc...) asparagine" evidence="2">
    <location>
        <position position="102"/>
    </location>
</feature>
<feature type="glycosylation site" description="N-linked (GlcNAc...) asparagine" evidence="2">
    <location>
        <position position="223"/>
    </location>
</feature>
<feature type="glycosylation site" description="N-linked (GlcNAc...) asparagine" evidence="2">
    <location>
        <position position="338"/>
    </location>
</feature>
<feature type="splice variant" id="VSP_050624" description="In isoform a." evidence="8">
    <location>
        <begin position="1"/>
        <end position="82"/>
    </location>
</feature>
<feature type="splice variant" id="VSP_050625" description="In isoform a." evidence="8">
    <original>EDSEEGSHHGL</original>
    <variation>MNLFENENKVK</variation>
    <location>
        <begin position="83"/>
        <end position="93"/>
    </location>
</feature>